<accession>Q4FTX0</accession>
<evidence type="ECO:0000255" key="1">
    <source>
        <dbReference type="HAMAP-Rule" id="MF_01849"/>
    </source>
</evidence>
<evidence type="ECO:0000255" key="2">
    <source>
        <dbReference type="PROSITE-ProRule" id="PRU01266"/>
    </source>
</evidence>
<name>RLMN_PSYA2</name>
<dbReference type="EC" id="2.1.1.192" evidence="1"/>
<dbReference type="EMBL" id="CP000082">
    <property type="protein sequence ID" value="AAZ18538.1"/>
    <property type="molecule type" value="Genomic_DNA"/>
</dbReference>
<dbReference type="RefSeq" id="WP_011279965.1">
    <property type="nucleotide sequence ID" value="NC_007204.1"/>
</dbReference>
<dbReference type="SMR" id="Q4FTX0"/>
<dbReference type="STRING" id="259536.Psyc_0679"/>
<dbReference type="KEGG" id="par:Psyc_0679"/>
<dbReference type="eggNOG" id="COG0820">
    <property type="taxonomic scope" value="Bacteria"/>
</dbReference>
<dbReference type="HOGENOM" id="CLU_029101_0_0_6"/>
<dbReference type="Proteomes" id="UP000000546">
    <property type="component" value="Chromosome"/>
</dbReference>
<dbReference type="GO" id="GO:0005737">
    <property type="term" value="C:cytoplasm"/>
    <property type="evidence" value="ECO:0007669"/>
    <property type="project" value="UniProtKB-SubCell"/>
</dbReference>
<dbReference type="GO" id="GO:0051539">
    <property type="term" value="F:4 iron, 4 sulfur cluster binding"/>
    <property type="evidence" value="ECO:0007669"/>
    <property type="project" value="UniProtKB-UniRule"/>
</dbReference>
<dbReference type="GO" id="GO:0046872">
    <property type="term" value="F:metal ion binding"/>
    <property type="evidence" value="ECO:0007669"/>
    <property type="project" value="UniProtKB-KW"/>
</dbReference>
<dbReference type="GO" id="GO:0070040">
    <property type="term" value="F:rRNA (adenine(2503)-C2-)-methyltransferase activity"/>
    <property type="evidence" value="ECO:0007669"/>
    <property type="project" value="UniProtKB-UniRule"/>
</dbReference>
<dbReference type="GO" id="GO:0019843">
    <property type="term" value="F:rRNA binding"/>
    <property type="evidence" value="ECO:0007669"/>
    <property type="project" value="UniProtKB-UniRule"/>
</dbReference>
<dbReference type="GO" id="GO:0002935">
    <property type="term" value="F:tRNA (adenine(37)-C2)-methyltransferase activity"/>
    <property type="evidence" value="ECO:0007669"/>
    <property type="project" value="UniProtKB-UniRule"/>
</dbReference>
<dbReference type="GO" id="GO:0000049">
    <property type="term" value="F:tRNA binding"/>
    <property type="evidence" value="ECO:0007669"/>
    <property type="project" value="UniProtKB-UniRule"/>
</dbReference>
<dbReference type="GO" id="GO:0070475">
    <property type="term" value="P:rRNA base methylation"/>
    <property type="evidence" value="ECO:0007669"/>
    <property type="project" value="UniProtKB-UniRule"/>
</dbReference>
<dbReference type="GO" id="GO:0030488">
    <property type="term" value="P:tRNA methylation"/>
    <property type="evidence" value="ECO:0007669"/>
    <property type="project" value="UniProtKB-UniRule"/>
</dbReference>
<dbReference type="CDD" id="cd01335">
    <property type="entry name" value="Radical_SAM"/>
    <property type="match status" value="1"/>
</dbReference>
<dbReference type="FunFam" id="1.10.150.530:FF:000003">
    <property type="entry name" value="Dual-specificity RNA methyltransferase RlmN"/>
    <property type="match status" value="1"/>
</dbReference>
<dbReference type="FunFam" id="3.20.20.70:FF:000008">
    <property type="entry name" value="Dual-specificity RNA methyltransferase RlmN"/>
    <property type="match status" value="1"/>
</dbReference>
<dbReference type="Gene3D" id="1.10.150.530">
    <property type="match status" value="1"/>
</dbReference>
<dbReference type="Gene3D" id="3.20.20.70">
    <property type="entry name" value="Aldolase class I"/>
    <property type="match status" value="1"/>
</dbReference>
<dbReference type="HAMAP" id="MF_01849">
    <property type="entry name" value="RNA_methyltr_RlmN"/>
    <property type="match status" value="1"/>
</dbReference>
<dbReference type="InterPro" id="IPR013785">
    <property type="entry name" value="Aldolase_TIM"/>
</dbReference>
<dbReference type="InterPro" id="IPR040072">
    <property type="entry name" value="Methyltransferase_A"/>
</dbReference>
<dbReference type="InterPro" id="IPR048641">
    <property type="entry name" value="RlmN_N"/>
</dbReference>
<dbReference type="InterPro" id="IPR027492">
    <property type="entry name" value="RNA_MTrfase_RlmN"/>
</dbReference>
<dbReference type="InterPro" id="IPR004383">
    <property type="entry name" value="rRNA_lsu_MTrfase_RlmN/Cfr"/>
</dbReference>
<dbReference type="InterPro" id="IPR007197">
    <property type="entry name" value="rSAM"/>
</dbReference>
<dbReference type="NCBIfam" id="TIGR00048">
    <property type="entry name" value="rRNA_mod_RlmN"/>
    <property type="match status" value="1"/>
</dbReference>
<dbReference type="PANTHER" id="PTHR30544">
    <property type="entry name" value="23S RRNA METHYLTRANSFERASE"/>
    <property type="match status" value="1"/>
</dbReference>
<dbReference type="PANTHER" id="PTHR30544:SF5">
    <property type="entry name" value="RADICAL SAM CORE DOMAIN-CONTAINING PROTEIN"/>
    <property type="match status" value="1"/>
</dbReference>
<dbReference type="Pfam" id="PF04055">
    <property type="entry name" value="Radical_SAM"/>
    <property type="match status" value="1"/>
</dbReference>
<dbReference type="Pfam" id="PF21016">
    <property type="entry name" value="RlmN_N"/>
    <property type="match status" value="1"/>
</dbReference>
<dbReference type="PIRSF" id="PIRSF006004">
    <property type="entry name" value="CHP00048"/>
    <property type="match status" value="1"/>
</dbReference>
<dbReference type="SFLD" id="SFLDF00275">
    <property type="entry name" value="adenosine_C2_methyltransferase"/>
    <property type="match status" value="1"/>
</dbReference>
<dbReference type="SFLD" id="SFLDS00029">
    <property type="entry name" value="Radical_SAM"/>
    <property type="match status" value="1"/>
</dbReference>
<dbReference type="SUPFAM" id="SSF102114">
    <property type="entry name" value="Radical SAM enzymes"/>
    <property type="match status" value="1"/>
</dbReference>
<dbReference type="PROSITE" id="PS51918">
    <property type="entry name" value="RADICAL_SAM"/>
    <property type="match status" value="1"/>
</dbReference>
<sequence length="409" mass="45504">MSTVQTPVQYLPAKTANSIKLVDEAQAKTNLLGMTQAQLADYFKSIGEKPFRSTQVIKWIYQQGVTDFEQMTNLSKSLRDKLSANACVIPPKVIHRQYSDDGTRKWVFEVTGGSLVETVLIPADDSKLNGRKTLCISSQVGCALDCSFCSTGKQGFERDLTAAEILGQLWVANASYMSDENDSLENIDHSLWENNVTNVVMMGMGEPLLNYRPVVSSMELMLSDHAYGLSKRRVTLSTSGVVPKMYELAKELDVALAISLHAPNDELRNELVPINKKYPLEQLMAAARNYVFDVNPRHKKHVTIEYVMLDGVNDSNEHAEQLVALLGDLPSKINLIPFNPFPHANYDKSSNNRIHAFSNILSEAGFVCTIRQTRGDDIDAACGQLVGQVADRTRRSAAWQQSIKDRENS</sequence>
<gene>
    <name evidence="1" type="primary">rlmN</name>
    <name type="ordered locus">Psyc_0679</name>
</gene>
<organism>
    <name type="scientific">Psychrobacter arcticus (strain DSM 17307 / VKM B-2377 / 273-4)</name>
    <dbReference type="NCBI Taxonomy" id="259536"/>
    <lineage>
        <taxon>Bacteria</taxon>
        <taxon>Pseudomonadati</taxon>
        <taxon>Pseudomonadota</taxon>
        <taxon>Gammaproteobacteria</taxon>
        <taxon>Moraxellales</taxon>
        <taxon>Moraxellaceae</taxon>
        <taxon>Psychrobacter</taxon>
    </lineage>
</organism>
<feature type="chain" id="PRO_0000350349" description="Dual-specificity RNA methyltransferase RlmN">
    <location>
        <begin position="1"/>
        <end position="409"/>
    </location>
</feature>
<feature type="domain" description="Radical SAM core" evidence="2">
    <location>
        <begin position="128"/>
        <end position="377"/>
    </location>
</feature>
<feature type="active site" description="Proton acceptor" evidence="1">
    <location>
        <position position="117"/>
    </location>
</feature>
<feature type="active site" description="S-methylcysteine intermediate" evidence="1">
    <location>
        <position position="382"/>
    </location>
</feature>
<feature type="binding site" evidence="1">
    <location>
        <position position="142"/>
    </location>
    <ligand>
        <name>[4Fe-4S] cluster</name>
        <dbReference type="ChEBI" id="CHEBI:49883"/>
        <note>4Fe-4S-S-AdoMet</note>
    </ligand>
</feature>
<feature type="binding site" evidence="1">
    <location>
        <position position="146"/>
    </location>
    <ligand>
        <name>[4Fe-4S] cluster</name>
        <dbReference type="ChEBI" id="CHEBI:49883"/>
        <note>4Fe-4S-S-AdoMet</note>
    </ligand>
</feature>
<feature type="binding site" evidence="1">
    <location>
        <position position="149"/>
    </location>
    <ligand>
        <name>[4Fe-4S] cluster</name>
        <dbReference type="ChEBI" id="CHEBI:49883"/>
        <note>4Fe-4S-S-AdoMet</note>
    </ligand>
</feature>
<feature type="binding site" evidence="1">
    <location>
        <begin position="205"/>
        <end position="206"/>
    </location>
    <ligand>
        <name>S-adenosyl-L-methionine</name>
        <dbReference type="ChEBI" id="CHEBI:59789"/>
    </ligand>
</feature>
<feature type="binding site" evidence="1">
    <location>
        <position position="237"/>
    </location>
    <ligand>
        <name>S-adenosyl-L-methionine</name>
        <dbReference type="ChEBI" id="CHEBI:59789"/>
    </ligand>
</feature>
<feature type="binding site" evidence="1">
    <location>
        <begin position="259"/>
        <end position="261"/>
    </location>
    <ligand>
        <name>S-adenosyl-L-methionine</name>
        <dbReference type="ChEBI" id="CHEBI:59789"/>
    </ligand>
</feature>
<feature type="binding site" evidence="1">
    <location>
        <position position="339"/>
    </location>
    <ligand>
        <name>S-adenosyl-L-methionine</name>
        <dbReference type="ChEBI" id="CHEBI:59789"/>
    </ligand>
</feature>
<feature type="disulfide bond" description="(transient)" evidence="1">
    <location>
        <begin position="135"/>
        <end position="382"/>
    </location>
</feature>
<proteinExistence type="inferred from homology"/>
<reference key="1">
    <citation type="journal article" date="2010" name="Appl. Environ. Microbiol.">
        <title>The genome sequence of Psychrobacter arcticus 273-4, a psychroactive Siberian permafrost bacterium, reveals mechanisms for adaptation to low-temperature growth.</title>
        <authorList>
            <person name="Ayala-del-Rio H.L."/>
            <person name="Chain P.S."/>
            <person name="Grzymski J.J."/>
            <person name="Ponder M.A."/>
            <person name="Ivanova N."/>
            <person name="Bergholz P.W."/>
            <person name="Di Bartolo G."/>
            <person name="Hauser L."/>
            <person name="Land M."/>
            <person name="Bakermans C."/>
            <person name="Rodrigues D."/>
            <person name="Klappenbach J."/>
            <person name="Zarka D."/>
            <person name="Larimer F."/>
            <person name="Richardson P."/>
            <person name="Murray A."/>
            <person name="Thomashow M."/>
            <person name="Tiedje J.M."/>
        </authorList>
    </citation>
    <scope>NUCLEOTIDE SEQUENCE [LARGE SCALE GENOMIC DNA]</scope>
    <source>
        <strain>DSM 17307 / VKM B-2377 / 273-4</strain>
    </source>
</reference>
<comment type="function">
    <text evidence="1">Specifically methylates position 2 of adenine 2503 in 23S rRNA and position 2 of adenine 37 in tRNAs. m2A2503 modification seems to play a crucial role in the proofreading step occurring at the peptidyl transferase center and thus would serve to optimize ribosomal fidelity.</text>
</comment>
<comment type="catalytic activity">
    <reaction evidence="1">
        <text>adenosine(2503) in 23S rRNA + 2 reduced [2Fe-2S]-[ferredoxin] + 2 S-adenosyl-L-methionine = 2-methyladenosine(2503) in 23S rRNA + 5'-deoxyadenosine + L-methionine + 2 oxidized [2Fe-2S]-[ferredoxin] + S-adenosyl-L-homocysteine</text>
        <dbReference type="Rhea" id="RHEA:42916"/>
        <dbReference type="Rhea" id="RHEA-COMP:10000"/>
        <dbReference type="Rhea" id="RHEA-COMP:10001"/>
        <dbReference type="Rhea" id="RHEA-COMP:10152"/>
        <dbReference type="Rhea" id="RHEA-COMP:10282"/>
        <dbReference type="ChEBI" id="CHEBI:17319"/>
        <dbReference type="ChEBI" id="CHEBI:33737"/>
        <dbReference type="ChEBI" id="CHEBI:33738"/>
        <dbReference type="ChEBI" id="CHEBI:57844"/>
        <dbReference type="ChEBI" id="CHEBI:57856"/>
        <dbReference type="ChEBI" id="CHEBI:59789"/>
        <dbReference type="ChEBI" id="CHEBI:74411"/>
        <dbReference type="ChEBI" id="CHEBI:74497"/>
        <dbReference type="EC" id="2.1.1.192"/>
    </reaction>
</comment>
<comment type="catalytic activity">
    <reaction evidence="1">
        <text>adenosine(37) in tRNA + 2 reduced [2Fe-2S]-[ferredoxin] + 2 S-adenosyl-L-methionine = 2-methyladenosine(37) in tRNA + 5'-deoxyadenosine + L-methionine + 2 oxidized [2Fe-2S]-[ferredoxin] + S-adenosyl-L-homocysteine</text>
        <dbReference type="Rhea" id="RHEA:43332"/>
        <dbReference type="Rhea" id="RHEA-COMP:10000"/>
        <dbReference type="Rhea" id="RHEA-COMP:10001"/>
        <dbReference type="Rhea" id="RHEA-COMP:10162"/>
        <dbReference type="Rhea" id="RHEA-COMP:10485"/>
        <dbReference type="ChEBI" id="CHEBI:17319"/>
        <dbReference type="ChEBI" id="CHEBI:33737"/>
        <dbReference type="ChEBI" id="CHEBI:33738"/>
        <dbReference type="ChEBI" id="CHEBI:57844"/>
        <dbReference type="ChEBI" id="CHEBI:57856"/>
        <dbReference type="ChEBI" id="CHEBI:59789"/>
        <dbReference type="ChEBI" id="CHEBI:74411"/>
        <dbReference type="ChEBI" id="CHEBI:74497"/>
        <dbReference type="EC" id="2.1.1.192"/>
    </reaction>
</comment>
<comment type="cofactor">
    <cofactor evidence="1">
        <name>[4Fe-4S] cluster</name>
        <dbReference type="ChEBI" id="CHEBI:49883"/>
    </cofactor>
    <text evidence="1">Binds 1 [4Fe-4S] cluster. The cluster is coordinated with 3 cysteines and an exchangeable S-adenosyl-L-methionine.</text>
</comment>
<comment type="subcellular location">
    <subcellularLocation>
        <location evidence="1">Cytoplasm</location>
    </subcellularLocation>
</comment>
<comment type="miscellaneous">
    <text evidence="1">Reaction proceeds by a ping-pong mechanism involving intermediate methylation of a conserved cysteine residue.</text>
</comment>
<comment type="similarity">
    <text evidence="1">Belongs to the radical SAM superfamily. RlmN family.</text>
</comment>
<keyword id="KW-0004">4Fe-4S</keyword>
<keyword id="KW-0963">Cytoplasm</keyword>
<keyword id="KW-1015">Disulfide bond</keyword>
<keyword id="KW-0408">Iron</keyword>
<keyword id="KW-0411">Iron-sulfur</keyword>
<keyword id="KW-0479">Metal-binding</keyword>
<keyword id="KW-0489">Methyltransferase</keyword>
<keyword id="KW-1185">Reference proteome</keyword>
<keyword id="KW-0698">rRNA processing</keyword>
<keyword id="KW-0949">S-adenosyl-L-methionine</keyword>
<keyword id="KW-0808">Transferase</keyword>
<keyword id="KW-0819">tRNA processing</keyword>
<protein>
    <recommendedName>
        <fullName evidence="1">Dual-specificity RNA methyltransferase RlmN</fullName>
        <ecNumber evidence="1">2.1.1.192</ecNumber>
    </recommendedName>
    <alternativeName>
        <fullName evidence="1">23S rRNA (adenine(2503)-C(2))-methyltransferase</fullName>
    </alternativeName>
    <alternativeName>
        <fullName evidence="1">23S rRNA m2A2503 methyltransferase</fullName>
    </alternativeName>
    <alternativeName>
        <fullName evidence="1">Ribosomal RNA large subunit methyltransferase N</fullName>
    </alternativeName>
    <alternativeName>
        <fullName evidence="1">tRNA (adenine(37)-C(2))-methyltransferase</fullName>
    </alternativeName>
    <alternativeName>
        <fullName evidence="1">tRNA m2A37 methyltransferase</fullName>
    </alternativeName>
</protein>